<gene>
    <name type="primary">aldB</name>
    <name type="ordered locus">llmg_1275</name>
</gene>
<dbReference type="EC" id="4.1.1.5"/>
<dbReference type="EMBL" id="X82620">
    <property type="protein sequence ID" value="CAA57941.1"/>
    <property type="molecule type" value="Genomic_DNA"/>
</dbReference>
<dbReference type="EMBL" id="AM406671">
    <property type="protein sequence ID" value="CAL97868.1"/>
    <property type="molecule type" value="Genomic_DNA"/>
</dbReference>
<dbReference type="RefSeq" id="WP_011835154.1">
    <property type="nucleotide sequence ID" value="NC_009004.1"/>
</dbReference>
<dbReference type="SMR" id="P77880"/>
<dbReference type="STRING" id="416870.llmg_1275"/>
<dbReference type="KEGG" id="llm:llmg_1275"/>
<dbReference type="eggNOG" id="COG3527">
    <property type="taxonomic scope" value="Bacteria"/>
</dbReference>
<dbReference type="HOGENOM" id="CLU_072561_0_0_9"/>
<dbReference type="OrthoDB" id="8612680at2"/>
<dbReference type="PhylomeDB" id="P77880"/>
<dbReference type="UniPathway" id="UPA00626">
    <property type="reaction ID" value="UER00678"/>
</dbReference>
<dbReference type="Proteomes" id="UP000000364">
    <property type="component" value="Chromosome"/>
</dbReference>
<dbReference type="GO" id="GO:0047605">
    <property type="term" value="F:acetolactate decarboxylase activity"/>
    <property type="evidence" value="ECO:0007669"/>
    <property type="project" value="UniProtKB-EC"/>
</dbReference>
<dbReference type="GO" id="GO:0045151">
    <property type="term" value="P:acetoin biosynthetic process"/>
    <property type="evidence" value="ECO:0007669"/>
    <property type="project" value="UniProtKB-KW"/>
</dbReference>
<dbReference type="CDD" id="cd17299">
    <property type="entry name" value="acetolactate_decarboxylase"/>
    <property type="match status" value="1"/>
</dbReference>
<dbReference type="Gene3D" id="3.30.1330.80">
    <property type="entry name" value="Hypothetical protein, similar to alpha- acetolactate decarboxylase, domain 2"/>
    <property type="match status" value="2"/>
</dbReference>
<dbReference type="InterPro" id="IPR005128">
    <property type="entry name" value="Acetolactate_a_deCO2ase"/>
</dbReference>
<dbReference type="NCBIfam" id="TIGR01252">
    <property type="entry name" value="acetolac_decarb"/>
    <property type="match status" value="1"/>
</dbReference>
<dbReference type="PANTHER" id="PTHR35524">
    <property type="entry name" value="ALPHA-ACETOLACTATE DECARBOXYLASE"/>
    <property type="match status" value="1"/>
</dbReference>
<dbReference type="PANTHER" id="PTHR35524:SF1">
    <property type="entry name" value="ALPHA-ACETOLACTATE DECARBOXYLASE"/>
    <property type="match status" value="1"/>
</dbReference>
<dbReference type="Pfam" id="PF03306">
    <property type="entry name" value="AAL_decarboxy"/>
    <property type="match status" value="1"/>
</dbReference>
<dbReference type="PIRSF" id="PIRSF001332">
    <property type="entry name" value="Acetolac_decarb"/>
    <property type="match status" value="1"/>
</dbReference>
<dbReference type="SUPFAM" id="SSF117856">
    <property type="entry name" value="AF0104/ALDC/Ptd012-like"/>
    <property type="match status" value="1"/>
</dbReference>
<accession>P77880</accession>
<accession>A2RKQ4</accession>
<reference key="1">
    <citation type="journal article" date="1996" name="Appl. Environ. Microbiol.">
        <title>Genetic manipulation of the pathway for diacetyl metabolism in Lactococcus lactis.</title>
        <authorList>
            <person name="Swindell S.R."/>
            <person name="Benson K.H."/>
            <person name="Griffin H.G."/>
            <person name="Renault P."/>
            <person name="Ehrlich S.D."/>
            <person name="Gasson M.J."/>
        </authorList>
    </citation>
    <scope>NUCLEOTIDE SEQUENCE [GENOMIC DNA]</scope>
</reference>
<reference key="2">
    <citation type="journal article" date="2007" name="J. Bacteriol.">
        <title>The complete genome sequence of the lactic acid bacterial paradigm Lactococcus lactis subsp. cremoris MG1363.</title>
        <authorList>
            <person name="Wegmann U."/>
            <person name="O'Connell-Motherway M."/>
            <person name="Zomer A."/>
            <person name="Buist G."/>
            <person name="Shearman C."/>
            <person name="Canchaya C."/>
            <person name="Ventura M."/>
            <person name="Goesmann A."/>
            <person name="Gasson M.J."/>
            <person name="Kuipers O.P."/>
            <person name="van Sinderen D."/>
            <person name="Kok J."/>
        </authorList>
    </citation>
    <scope>NUCLEOTIDE SEQUENCE [LARGE SCALE GENOMIC DNA]</scope>
    <source>
        <strain>MG1363</strain>
    </source>
</reference>
<protein>
    <recommendedName>
        <fullName>Alpha-acetolactate decarboxylase</fullName>
        <ecNumber>4.1.1.5</ecNumber>
    </recommendedName>
</protein>
<organism>
    <name type="scientific">Lactococcus lactis subsp. cremoris (strain MG1363)</name>
    <dbReference type="NCBI Taxonomy" id="416870"/>
    <lineage>
        <taxon>Bacteria</taxon>
        <taxon>Bacillati</taxon>
        <taxon>Bacillota</taxon>
        <taxon>Bacilli</taxon>
        <taxon>Lactobacillales</taxon>
        <taxon>Streptococcaceae</taxon>
        <taxon>Lactococcus</taxon>
        <taxon>Lactococcus cremoris subsp. cremoris</taxon>
    </lineage>
</organism>
<feature type="chain" id="PRO_0000218442" description="Alpha-acetolactate decarboxylase">
    <location>
        <begin position="1"/>
        <end position="236"/>
    </location>
</feature>
<comment type="function">
    <text>Converts acetolactate into acetoin.</text>
</comment>
<comment type="catalytic activity">
    <reaction>
        <text>(2S)-2-acetolactate + H(+) = (R)-acetoin + CO2</text>
        <dbReference type="Rhea" id="RHEA:21580"/>
        <dbReference type="ChEBI" id="CHEBI:15378"/>
        <dbReference type="ChEBI" id="CHEBI:15686"/>
        <dbReference type="ChEBI" id="CHEBI:16526"/>
        <dbReference type="ChEBI" id="CHEBI:58476"/>
        <dbReference type="EC" id="4.1.1.5"/>
    </reaction>
</comment>
<comment type="pathway">
    <text>Polyol metabolism; (R,R)-butane-2,3-diol biosynthesis; (R,R)-butane-2,3-diol from pyruvate: step 2/3.</text>
</comment>
<comment type="similarity">
    <text evidence="1">Belongs to the alpha-acetolactate decarboxylase family.</text>
</comment>
<sequence length="236" mass="26366">MSEITQLFQYNTLGALMAGLYEGTMTIGELLKHGDLGIGTLDSIDGELIVLDGKAYQAKGDKTIVELTDDIKVPYAAVVPHQAEVVFKQKFTVSDKELEDRIESYFDGQNLFRSIKITGKFPKMHVRMIPRAKSGTKFVEVSQNQPEYTEENIKGTIVGIWTPEMFHGVSVAGYHLHFISEDFTFGGHVLDFIIDNGTVEIGAIDQLNQSFPVQDRKFLFADLDIEALKKDIDVAE</sequence>
<keyword id="KW-0005">Acetoin biosynthesis</keyword>
<keyword id="KW-0210">Decarboxylase</keyword>
<keyword id="KW-0456">Lyase</keyword>
<name>ALDC_LACLM</name>
<proteinExistence type="inferred from homology"/>
<evidence type="ECO:0000305" key="1"/>